<name>BIOF_BURP6</name>
<gene>
    <name evidence="1" type="primary">bioF</name>
    <name type="ordered locus">BURPS668_0390</name>
</gene>
<keyword id="KW-0093">Biotin biosynthesis</keyword>
<keyword id="KW-0663">Pyridoxal phosphate</keyword>
<keyword id="KW-0808">Transferase</keyword>
<organism>
    <name type="scientific">Burkholderia pseudomallei (strain 668)</name>
    <dbReference type="NCBI Taxonomy" id="320373"/>
    <lineage>
        <taxon>Bacteria</taxon>
        <taxon>Pseudomonadati</taxon>
        <taxon>Pseudomonadota</taxon>
        <taxon>Betaproteobacteria</taxon>
        <taxon>Burkholderiales</taxon>
        <taxon>Burkholderiaceae</taxon>
        <taxon>Burkholderia</taxon>
        <taxon>pseudomallei group</taxon>
    </lineage>
</organism>
<reference key="1">
    <citation type="journal article" date="2010" name="Genome Biol. Evol.">
        <title>Continuing evolution of Burkholderia mallei through genome reduction and large-scale rearrangements.</title>
        <authorList>
            <person name="Losada L."/>
            <person name="Ronning C.M."/>
            <person name="DeShazer D."/>
            <person name="Woods D."/>
            <person name="Fedorova N."/>
            <person name="Kim H.S."/>
            <person name="Shabalina S.A."/>
            <person name="Pearson T.R."/>
            <person name="Brinkac L."/>
            <person name="Tan P."/>
            <person name="Nandi T."/>
            <person name="Crabtree J."/>
            <person name="Badger J."/>
            <person name="Beckstrom-Sternberg S."/>
            <person name="Saqib M."/>
            <person name="Schutzer S.E."/>
            <person name="Keim P."/>
            <person name="Nierman W.C."/>
        </authorList>
    </citation>
    <scope>NUCLEOTIDE SEQUENCE [LARGE SCALE GENOMIC DNA]</scope>
    <source>
        <strain>668</strain>
    </source>
</reference>
<comment type="function">
    <text evidence="1">Catalyzes the decarboxylative condensation of pimeloyl-[acyl-carrier protein] and L-alanine to produce 8-amino-7-oxononanoate (AON), [acyl-carrier protein], and carbon dioxide.</text>
</comment>
<comment type="catalytic activity">
    <reaction evidence="1">
        <text>6-carboxyhexanoyl-[ACP] + L-alanine + H(+) = (8S)-8-amino-7-oxononanoate + holo-[ACP] + CO2</text>
        <dbReference type="Rhea" id="RHEA:42288"/>
        <dbReference type="Rhea" id="RHEA-COMP:9685"/>
        <dbReference type="Rhea" id="RHEA-COMP:9955"/>
        <dbReference type="ChEBI" id="CHEBI:15378"/>
        <dbReference type="ChEBI" id="CHEBI:16526"/>
        <dbReference type="ChEBI" id="CHEBI:57972"/>
        <dbReference type="ChEBI" id="CHEBI:64479"/>
        <dbReference type="ChEBI" id="CHEBI:78846"/>
        <dbReference type="ChEBI" id="CHEBI:149468"/>
        <dbReference type="EC" id="2.3.1.47"/>
    </reaction>
</comment>
<comment type="cofactor">
    <cofactor evidence="1">
        <name>pyridoxal 5'-phosphate</name>
        <dbReference type="ChEBI" id="CHEBI:597326"/>
    </cofactor>
</comment>
<comment type="pathway">
    <text evidence="1">Cofactor biosynthesis; biotin biosynthesis.</text>
</comment>
<comment type="subunit">
    <text evidence="1">Homodimer.</text>
</comment>
<comment type="similarity">
    <text evidence="1">Belongs to the class-II pyridoxal-phosphate-dependent aminotransferase family. BioF subfamily.</text>
</comment>
<accession>A3N522</accession>
<evidence type="ECO:0000255" key="1">
    <source>
        <dbReference type="HAMAP-Rule" id="MF_01693"/>
    </source>
</evidence>
<dbReference type="EC" id="2.3.1.47" evidence="1"/>
<dbReference type="EMBL" id="CP000570">
    <property type="protein sequence ID" value="ABN84219.1"/>
    <property type="molecule type" value="Genomic_DNA"/>
</dbReference>
<dbReference type="RefSeq" id="WP_004189736.1">
    <property type="nucleotide sequence ID" value="NC_009074.1"/>
</dbReference>
<dbReference type="SMR" id="A3N522"/>
<dbReference type="GeneID" id="93058884"/>
<dbReference type="KEGG" id="bpd:BURPS668_0390"/>
<dbReference type="HOGENOM" id="CLU_015846_11_2_4"/>
<dbReference type="UniPathway" id="UPA00078"/>
<dbReference type="GO" id="GO:0008710">
    <property type="term" value="F:8-amino-7-oxononanoate synthase activity"/>
    <property type="evidence" value="ECO:0007669"/>
    <property type="project" value="UniProtKB-UniRule"/>
</dbReference>
<dbReference type="GO" id="GO:0030170">
    <property type="term" value="F:pyridoxal phosphate binding"/>
    <property type="evidence" value="ECO:0007669"/>
    <property type="project" value="UniProtKB-UniRule"/>
</dbReference>
<dbReference type="GO" id="GO:0009102">
    <property type="term" value="P:biotin biosynthetic process"/>
    <property type="evidence" value="ECO:0007669"/>
    <property type="project" value="UniProtKB-UniRule"/>
</dbReference>
<dbReference type="Gene3D" id="3.90.1150.10">
    <property type="entry name" value="Aspartate Aminotransferase, domain 1"/>
    <property type="match status" value="1"/>
</dbReference>
<dbReference type="Gene3D" id="3.40.640.10">
    <property type="entry name" value="Type I PLP-dependent aspartate aminotransferase-like (Major domain)"/>
    <property type="match status" value="1"/>
</dbReference>
<dbReference type="HAMAP" id="MF_01693">
    <property type="entry name" value="BioF_aminotrans_2"/>
    <property type="match status" value="1"/>
</dbReference>
<dbReference type="InterPro" id="IPR004839">
    <property type="entry name" value="Aminotransferase_I/II_large"/>
</dbReference>
<dbReference type="InterPro" id="IPR050087">
    <property type="entry name" value="AON_synthase_class-II"/>
</dbReference>
<dbReference type="InterPro" id="IPR004723">
    <property type="entry name" value="AONS_Archaea/Proteobacteria"/>
</dbReference>
<dbReference type="InterPro" id="IPR022834">
    <property type="entry name" value="AONS_Proteobacteria"/>
</dbReference>
<dbReference type="InterPro" id="IPR015424">
    <property type="entry name" value="PyrdxlP-dep_Trfase"/>
</dbReference>
<dbReference type="InterPro" id="IPR015421">
    <property type="entry name" value="PyrdxlP-dep_Trfase_major"/>
</dbReference>
<dbReference type="InterPro" id="IPR015422">
    <property type="entry name" value="PyrdxlP-dep_Trfase_small"/>
</dbReference>
<dbReference type="NCBIfam" id="TIGR00858">
    <property type="entry name" value="bioF"/>
    <property type="match status" value="1"/>
</dbReference>
<dbReference type="PANTHER" id="PTHR13693:SF100">
    <property type="entry name" value="8-AMINO-7-OXONONANOATE SYNTHASE"/>
    <property type="match status" value="1"/>
</dbReference>
<dbReference type="PANTHER" id="PTHR13693">
    <property type="entry name" value="CLASS II AMINOTRANSFERASE/8-AMINO-7-OXONONANOATE SYNTHASE"/>
    <property type="match status" value="1"/>
</dbReference>
<dbReference type="Pfam" id="PF00155">
    <property type="entry name" value="Aminotran_1_2"/>
    <property type="match status" value="1"/>
</dbReference>
<dbReference type="SUPFAM" id="SSF53383">
    <property type="entry name" value="PLP-dependent transferases"/>
    <property type="match status" value="1"/>
</dbReference>
<protein>
    <recommendedName>
        <fullName evidence="1">8-amino-7-oxononanoate synthase</fullName>
        <shortName evidence="1">AONS</shortName>
        <ecNumber evidence="1">2.3.1.47</ecNumber>
    </recommendedName>
    <alternativeName>
        <fullName evidence="1">7-keto-8-amino-pelargonic acid synthase</fullName>
        <shortName evidence="1">7-KAP synthase</shortName>
        <shortName evidence="1">KAPA synthase</shortName>
    </alternativeName>
    <alternativeName>
        <fullName evidence="1">8-amino-7-ketopelargonate synthase</fullName>
    </alternativeName>
</protein>
<feature type="chain" id="PRO_0000380940" description="8-amino-7-oxononanoate synthase">
    <location>
        <begin position="1"/>
        <end position="394"/>
    </location>
</feature>
<feature type="binding site" evidence="1">
    <location>
        <position position="21"/>
    </location>
    <ligand>
        <name>substrate</name>
    </ligand>
</feature>
<feature type="binding site" evidence="1">
    <location>
        <begin position="112"/>
        <end position="113"/>
    </location>
    <ligand>
        <name>pyridoxal 5'-phosphate</name>
        <dbReference type="ChEBI" id="CHEBI:597326"/>
    </ligand>
</feature>
<feature type="binding site" evidence="1">
    <location>
        <position position="137"/>
    </location>
    <ligand>
        <name>substrate</name>
    </ligand>
</feature>
<feature type="binding site" evidence="1">
    <location>
        <position position="183"/>
    </location>
    <ligand>
        <name>pyridoxal 5'-phosphate</name>
        <dbReference type="ChEBI" id="CHEBI:597326"/>
    </ligand>
</feature>
<feature type="binding site" evidence="1">
    <location>
        <position position="211"/>
    </location>
    <ligand>
        <name>pyridoxal 5'-phosphate</name>
        <dbReference type="ChEBI" id="CHEBI:597326"/>
    </ligand>
</feature>
<feature type="binding site" evidence="1">
    <location>
        <position position="239"/>
    </location>
    <ligand>
        <name>pyridoxal 5'-phosphate</name>
        <dbReference type="ChEBI" id="CHEBI:597326"/>
    </ligand>
</feature>
<feature type="binding site" evidence="1">
    <location>
        <position position="358"/>
    </location>
    <ligand>
        <name>substrate</name>
    </ligand>
</feature>
<feature type="modified residue" description="N6-(pyridoxal phosphate)lysine" evidence="1">
    <location>
        <position position="242"/>
    </location>
</feature>
<proteinExistence type="inferred from homology"/>
<sequence length="394" mass="40699">MNPLATLEQGLADIDAQGLRRCRRVADTACGAHMTVDGRAIIGFASNDYLGLAAHPRLVEAFAEGARRYGSGSGGSHLLGGHSRAHATLEDELAAFSGGFSDAPRALYFSTGYMANLAALTALAGRGATIFSDALNHASLIDGARLSRANVQIYPHGDADALDARLRACDAPTKLIVSDTVFSMDGDVAPLARLVALAETHGAWLVVDDAHGFGVLGPQGRGALAAHGLRSPNLVYVGTLGKAAGVAGAFVVAHETVIEWLVQRARSYIFTTAAPPSVACAVSASLAVIASDEGDARRAHLGALIKRTRAILRATHWQPVDSHTAVQPLVIGSNEATLAAMAALDAQGLWVPAIRPPTVPAGTSRLRISLSAAHSFDDLARLEAALVTPIGAAA</sequence>